<organism>
    <name type="scientific">Leuconostoc mesenteroides subsp. mesenteroides (strain ATCC 8293 / DSM 20343 / BCRC 11652 / CCM 1803 / JCM 6124 / NCDO 523 / NBRC 100496 / NCIMB 8023 / NCTC 12954 / NRRL B-1118 / 37Y)</name>
    <dbReference type="NCBI Taxonomy" id="203120"/>
    <lineage>
        <taxon>Bacteria</taxon>
        <taxon>Bacillati</taxon>
        <taxon>Bacillota</taxon>
        <taxon>Bacilli</taxon>
        <taxon>Lactobacillales</taxon>
        <taxon>Lactobacillaceae</taxon>
        <taxon>Leuconostoc</taxon>
    </lineage>
</organism>
<feature type="chain" id="PRO_1000003529" description="Small ribosomal subunit protein bS18">
    <location>
        <begin position="1"/>
        <end position="94"/>
    </location>
</feature>
<feature type="region of interest" description="Disordered" evidence="2">
    <location>
        <begin position="1"/>
        <end position="29"/>
    </location>
</feature>
<feature type="compositionally biased region" description="Low complexity" evidence="2">
    <location>
        <begin position="1"/>
        <end position="12"/>
    </location>
</feature>
<feature type="compositionally biased region" description="Basic residues" evidence="2">
    <location>
        <begin position="16"/>
        <end position="29"/>
    </location>
</feature>
<dbReference type="EMBL" id="CP000414">
    <property type="protein sequence ID" value="ABJ63039.1"/>
    <property type="molecule type" value="Genomic_DNA"/>
</dbReference>
<dbReference type="RefSeq" id="WP_004911134.1">
    <property type="nucleotide sequence ID" value="NC_008531.1"/>
</dbReference>
<dbReference type="SMR" id="Q03UT3"/>
<dbReference type="EnsemblBacteria" id="ABJ63039">
    <property type="protein sequence ID" value="ABJ63039"/>
    <property type="gene ID" value="LEUM_1968"/>
</dbReference>
<dbReference type="GeneID" id="97505257"/>
<dbReference type="KEGG" id="lme:LEUM_1968"/>
<dbReference type="eggNOG" id="COG0238">
    <property type="taxonomic scope" value="Bacteria"/>
</dbReference>
<dbReference type="HOGENOM" id="CLU_148710_2_2_9"/>
<dbReference type="Proteomes" id="UP000000362">
    <property type="component" value="Chromosome"/>
</dbReference>
<dbReference type="GO" id="GO:0022627">
    <property type="term" value="C:cytosolic small ribosomal subunit"/>
    <property type="evidence" value="ECO:0007669"/>
    <property type="project" value="TreeGrafter"/>
</dbReference>
<dbReference type="GO" id="GO:0070181">
    <property type="term" value="F:small ribosomal subunit rRNA binding"/>
    <property type="evidence" value="ECO:0007669"/>
    <property type="project" value="TreeGrafter"/>
</dbReference>
<dbReference type="GO" id="GO:0003735">
    <property type="term" value="F:structural constituent of ribosome"/>
    <property type="evidence" value="ECO:0007669"/>
    <property type="project" value="InterPro"/>
</dbReference>
<dbReference type="GO" id="GO:0006412">
    <property type="term" value="P:translation"/>
    <property type="evidence" value="ECO:0007669"/>
    <property type="project" value="UniProtKB-UniRule"/>
</dbReference>
<dbReference type="FunFam" id="4.10.640.10:FF:000003">
    <property type="entry name" value="30S ribosomal protein S18"/>
    <property type="match status" value="1"/>
</dbReference>
<dbReference type="Gene3D" id="4.10.640.10">
    <property type="entry name" value="Ribosomal protein S18"/>
    <property type="match status" value="1"/>
</dbReference>
<dbReference type="HAMAP" id="MF_00270">
    <property type="entry name" value="Ribosomal_bS18"/>
    <property type="match status" value="1"/>
</dbReference>
<dbReference type="InterPro" id="IPR001648">
    <property type="entry name" value="Ribosomal_bS18"/>
</dbReference>
<dbReference type="InterPro" id="IPR018275">
    <property type="entry name" value="Ribosomal_bS18_CS"/>
</dbReference>
<dbReference type="InterPro" id="IPR036870">
    <property type="entry name" value="Ribosomal_bS18_sf"/>
</dbReference>
<dbReference type="NCBIfam" id="TIGR00165">
    <property type="entry name" value="S18"/>
    <property type="match status" value="1"/>
</dbReference>
<dbReference type="PANTHER" id="PTHR13479">
    <property type="entry name" value="30S RIBOSOMAL PROTEIN S18"/>
    <property type="match status" value="1"/>
</dbReference>
<dbReference type="PANTHER" id="PTHR13479:SF40">
    <property type="entry name" value="SMALL RIBOSOMAL SUBUNIT PROTEIN BS18M"/>
    <property type="match status" value="1"/>
</dbReference>
<dbReference type="Pfam" id="PF01084">
    <property type="entry name" value="Ribosomal_S18"/>
    <property type="match status" value="1"/>
</dbReference>
<dbReference type="PRINTS" id="PR00974">
    <property type="entry name" value="RIBOSOMALS18"/>
</dbReference>
<dbReference type="SUPFAM" id="SSF46911">
    <property type="entry name" value="Ribosomal protein S18"/>
    <property type="match status" value="1"/>
</dbReference>
<dbReference type="PROSITE" id="PS00057">
    <property type="entry name" value="RIBOSOMAL_S18"/>
    <property type="match status" value="1"/>
</dbReference>
<comment type="function">
    <text evidence="1">Binds as a heterodimer with protein bS6 to the central domain of the 16S rRNA, where it helps stabilize the platform of the 30S subunit.</text>
</comment>
<comment type="subunit">
    <text evidence="1">Part of the 30S ribosomal subunit. Forms a tight heterodimer with protein bS6.</text>
</comment>
<comment type="similarity">
    <text evidence="1">Belongs to the bacterial ribosomal protein bS18 family.</text>
</comment>
<protein>
    <recommendedName>
        <fullName evidence="1">Small ribosomal subunit protein bS18</fullName>
    </recommendedName>
    <alternativeName>
        <fullName evidence="3">30S ribosomal protein S18</fullName>
    </alternativeName>
</protein>
<accession>Q03UT3</accession>
<keyword id="KW-1185">Reference proteome</keyword>
<keyword id="KW-0687">Ribonucleoprotein</keyword>
<keyword id="KW-0689">Ribosomal protein</keyword>
<keyword id="KW-0694">RNA-binding</keyword>
<keyword id="KW-0699">rRNA-binding</keyword>
<reference key="1">
    <citation type="journal article" date="2006" name="Proc. Natl. Acad. Sci. U.S.A.">
        <title>Comparative genomics of the lactic acid bacteria.</title>
        <authorList>
            <person name="Makarova K.S."/>
            <person name="Slesarev A."/>
            <person name="Wolf Y.I."/>
            <person name="Sorokin A."/>
            <person name="Mirkin B."/>
            <person name="Koonin E.V."/>
            <person name="Pavlov A."/>
            <person name="Pavlova N."/>
            <person name="Karamychev V."/>
            <person name="Polouchine N."/>
            <person name="Shakhova V."/>
            <person name="Grigoriev I."/>
            <person name="Lou Y."/>
            <person name="Rohksar D."/>
            <person name="Lucas S."/>
            <person name="Huang K."/>
            <person name="Goodstein D.M."/>
            <person name="Hawkins T."/>
            <person name="Plengvidhya V."/>
            <person name="Welker D."/>
            <person name="Hughes J."/>
            <person name="Goh Y."/>
            <person name="Benson A."/>
            <person name="Baldwin K."/>
            <person name="Lee J.-H."/>
            <person name="Diaz-Muniz I."/>
            <person name="Dosti B."/>
            <person name="Smeianov V."/>
            <person name="Wechter W."/>
            <person name="Barabote R."/>
            <person name="Lorca G."/>
            <person name="Altermann E."/>
            <person name="Barrangou R."/>
            <person name="Ganesan B."/>
            <person name="Xie Y."/>
            <person name="Rawsthorne H."/>
            <person name="Tamir D."/>
            <person name="Parker C."/>
            <person name="Breidt F."/>
            <person name="Broadbent J.R."/>
            <person name="Hutkins R."/>
            <person name="O'Sullivan D."/>
            <person name="Steele J."/>
            <person name="Unlu G."/>
            <person name="Saier M.H. Jr."/>
            <person name="Klaenhammer T."/>
            <person name="Richardson P."/>
            <person name="Kozyavkin S."/>
            <person name="Weimer B.C."/>
            <person name="Mills D.A."/>
        </authorList>
    </citation>
    <scope>NUCLEOTIDE SEQUENCE [LARGE SCALE GENOMIC DNA]</scope>
    <source>
        <strain>ATCC 8293 / DSM 20343 / BCRC 11652 / CCM 1803 / JCM 6124 / NCDO 523 / NBRC 100496 / NCIMB 8023 / NCTC 12954 / NRRL B-1118 / 37Y</strain>
    </source>
</reference>
<evidence type="ECO:0000255" key="1">
    <source>
        <dbReference type="HAMAP-Rule" id="MF_00270"/>
    </source>
</evidence>
<evidence type="ECO:0000256" key="2">
    <source>
        <dbReference type="SAM" id="MobiDB-lite"/>
    </source>
</evidence>
<evidence type="ECO:0000305" key="3"/>
<name>RS18_LEUMM</name>
<sequence>MSEQNSRPQNSERPQRSRRPQGGPRRRRKVDFIAANHIEYIDYKNTELLERFISERGKILPRRVTGTSAKNQRKVTTAIKRARIMALLPFVTED</sequence>
<gene>
    <name evidence="1" type="primary">rpsR</name>
    <name type="ordered locus">LEUM_1968</name>
</gene>
<proteinExistence type="inferred from homology"/>